<reference key="1">
    <citation type="journal article" date="2004" name="Nucleic Acids Res.">
        <title>Genome sequence of Symbiobacterium thermophilum, an uncultivable bacterium that depends on microbial commensalism.</title>
        <authorList>
            <person name="Ueda K."/>
            <person name="Yamashita A."/>
            <person name="Ishikawa J."/>
            <person name="Shimada M."/>
            <person name="Watsuji T."/>
            <person name="Morimura K."/>
            <person name="Ikeda H."/>
            <person name="Hattori M."/>
            <person name="Beppu T."/>
        </authorList>
    </citation>
    <scope>NUCLEOTIDE SEQUENCE [LARGE SCALE GENOMIC DNA]</scope>
    <source>
        <strain>DSM 24528 / JCM 14929 / IAM 14863 / T</strain>
    </source>
</reference>
<proteinExistence type="inferred from homology"/>
<dbReference type="EC" id="2.4.2.7" evidence="1"/>
<dbReference type="EMBL" id="AP006840">
    <property type="protein sequence ID" value="BAD41423.1"/>
    <property type="molecule type" value="Genomic_DNA"/>
</dbReference>
<dbReference type="RefSeq" id="WP_011196561.1">
    <property type="nucleotide sequence ID" value="NC_006177.1"/>
</dbReference>
<dbReference type="SMR" id="Q67LM3"/>
<dbReference type="STRING" id="292459.STH2438"/>
<dbReference type="KEGG" id="sth:STH2438"/>
<dbReference type="eggNOG" id="COG0503">
    <property type="taxonomic scope" value="Bacteria"/>
</dbReference>
<dbReference type="HOGENOM" id="CLU_063339_3_0_9"/>
<dbReference type="OrthoDB" id="9803963at2"/>
<dbReference type="UniPathway" id="UPA00588">
    <property type="reaction ID" value="UER00646"/>
</dbReference>
<dbReference type="Proteomes" id="UP000000417">
    <property type="component" value="Chromosome"/>
</dbReference>
<dbReference type="GO" id="GO:0005737">
    <property type="term" value="C:cytoplasm"/>
    <property type="evidence" value="ECO:0007669"/>
    <property type="project" value="UniProtKB-SubCell"/>
</dbReference>
<dbReference type="GO" id="GO:0002055">
    <property type="term" value="F:adenine binding"/>
    <property type="evidence" value="ECO:0007669"/>
    <property type="project" value="TreeGrafter"/>
</dbReference>
<dbReference type="GO" id="GO:0003999">
    <property type="term" value="F:adenine phosphoribosyltransferase activity"/>
    <property type="evidence" value="ECO:0007669"/>
    <property type="project" value="UniProtKB-UniRule"/>
</dbReference>
<dbReference type="GO" id="GO:0016208">
    <property type="term" value="F:AMP binding"/>
    <property type="evidence" value="ECO:0007669"/>
    <property type="project" value="TreeGrafter"/>
</dbReference>
<dbReference type="GO" id="GO:0006168">
    <property type="term" value="P:adenine salvage"/>
    <property type="evidence" value="ECO:0007669"/>
    <property type="project" value="InterPro"/>
</dbReference>
<dbReference type="GO" id="GO:0044209">
    <property type="term" value="P:AMP salvage"/>
    <property type="evidence" value="ECO:0007669"/>
    <property type="project" value="UniProtKB-UniRule"/>
</dbReference>
<dbReference type="GO" id="GO:0006166">
    <property type="term" value="P:purine ribonucleoside salvage"/>
    <property type="evidence" value="ECO:0007669"/>
    <property type="project" value="UniProtKB-KW"/>
</dbReference>
<dbReference type="CDD" id="cd06223">
    <property type="entry name" value="PRTases_typeI"/>
    <property type="match status" value="1"/>
</dbReference>
<dbReference type="FunFam" id="3.40.50.2020:FF:000004">
    <property type="entry name" value="Adenine phosphoribosyltransferase"/>
    <property type="match status" value="1"/>
</dbReference>
<dbReference type="Gene3D" id="3.40.50.2020">
    <property type="match status" value="1"/>
</dbReference>
<dbReference type="HAMAP" id="MF_00004">
    <property type="entry name" value="Aden_phosphoribosyltr"/>
    <property type="match status" value="1"/>
</dbReference>
<dbReference type="InterPro" id="IPR005764">
    <property type="entry name" value="Ade_phspho_trans"/>
</dbReference>
<dbReference type="InterPro" id="IPR000836">
    <property type="entry name" value="PRibTrfase_dom"/>
</dbReference>
<dbReference type="InterPro" id="IPR029057">
    <property type="entry name" value="PRTase-like"/>
</dbReference>
<dbReference type="InterPro" id="IPR050054">
    <property type="entry name" value="UPRTase/APRTase"/>
</dbReference>
<dbReference type="NCBIfam" id="TIGR01090">
    <property type="entry name" value="apt"/>
    <property type="match status" value="1"/>
</dbReference>
<dbReference type="NCBIfam" id="NF002633">
    <property type="entry name" value="PRK02304.1-2"/>
    <property type="match status" value="1"/>
</dbReference>
<dbReference type="NCBIfam" id="NF002634">
    <property type="entry name" value="PRK02304.1-3"/>
    <property type="match status" value="1"/>
</dbReference>
<dbReference type="NCBIfam" id="NF002636">
    <property type="entry name" value="PRK02304.1-5"/>
    <property type="match status" value="1"/>
</dbReference>
<dbReference type="PANTHER" id="PTHR32315">
    <property type="entry name" value="ADENINE PHOSPHORIBOSYLTRANSFERASE"/>
    <property type="match status" value="1"/>
</dbReference>
<dbReference type="PANTHER" id="PTHR32315:SF3">
    <property type="entry name" value="ADENINE PHOSPHORIBOSYLTRANSFERASE"/>
    <property type="match status" value="1"/>
</dbReference>
<dbReference type="Pfam" id="PF00156">
    <property type="entry name" value="Pribosyltran"/>
    <property type="match status" value="1"/>
</dbReference>
<dbReference type="SUPFAM" id="SSF53271">
    <property type="entry name" value="PRTase-like"/>
    <property type="match status" value="1"/>
</dbReference>
<dbReference type="PROSITE" id="PS00103">
    <property type="entry name" value="PUR_PYR_PR_TRANSFER"/>
    <property type="match status" value="1"/>
</dbReference>
<accession>Q67LM3</accession>
<evidence type="ECO:0000255" key="1">
    <source>
        <dbReference type="HAMAP-Rule" id="MF_00004"/>
    </source>
</evidence>
<feature type="chain" id="PRO_0000149473" description="Adenine phosphoribosyltransferase">
    <location>
        <begin position="1"/>
        <end position="170"/>
    </location>
</feature>
<name>APT_SYMTH</name>
<protein>
    <recommendedName>
        <fullName evidence="1">Adenine phosphoribosyltransferase</fullName>
        <shortName evidence="1">APRT</shortName>
        <ecNumber evidence="1">2.4.2.7</ecNumber>
    </recommendedName>
</protein>
<keyword id="KW-0963">Cytoplasm</keyword>
<keyword id="KW-0328">Glycosyltransferase</keyword>
<keyword id="KW-0660">Purine salvage</keyword>
<keyword id="KW-1185">Reference proteome</keyword>
<keyword id="KW-0808">Transferase</keyword>
<organism>
    <name type="scientific">Symbiobacterium thermophilum (strain DSM 24528 / JCM 14929 / IAM 14863 / T)</name>
    <dbReference type="NCBI Taxonomy" id="292459"/>
    <lineage>
        <taxon>Bacteria</taxon>
        <taxon>Bacillati</taxon>
        <taxon>Bacillota</taxon>
        <taxon>Clostridia</taxon>
        <taxon>Eubacteriales</taxon>
        <taxon>Symbiobacteriaceae</taxon>
        <taxon>Symbiobacterium</taxon>
    </lineage>
</organism>
<sequence length="170" mass="18653">MDFKSKIRTVDDFPKPGISFKDITTLLKDGEAFHAAIETMAAHFEPLGINMVTGPEARGYIFASALAFRLRAGFVPIRKPGKLPWKTRSISYQLEYGEDRLEVHEDAFQPGQKVLVVDDLLATGGTIRATIDLVESLGAKVVGVAVLIELSDLGGRKRLEGHDVISLVQF</sequence>
<comment type="function">
    <text evidence="1">Catalyzes a salvage reaction resulting in the formation of AMP, that is energically less costly than de novo synthesis.</text>
</comment>
<comment type="catalytic activity">
    <reaction evidence="1">
        <text>AMP + diphosphate = 5-phospho-alpha-D-ribose 1-diphosphate + adenine</text>
        <dbReference type="Rhea" id="RHEA:16609"/>
        <dbReference type="ChEBI" id="CHEBI:16708"/>
        <dbReference type="ChEBI" id="CHEBI:33019"/>
        <dbReference type="ChEBI" id="CHEBI:58017"/>
        <dbReference type="ChEBI" id="CHEBI:456215"/>
        <dbReference type="EC" id="2.4.2.7"/>
    </reaction>
</comment>
<comment type="pathway">
    <text evidence="1">Purine metabolism; AMP biosynthesis via salvage pathway; AMP from adenine: step 1/1.</text>
</comment>
<comment type="subunit">
    <text evidence="1">Homodimer.</text>
</comment>
<comment type="subcellular location">
    <subcellularLocation>
        <location evidence="1">Cytoplasm</location>
    </subcellularLocation>
</comment>
<comment type="similarity">
    <text evidence="1">Belongs to the purine/pyrimidine phosphoribosyltransferase family.</text>
</comment>
<gene>
    <name evidence="1" type="primary">apt</name>
    <name type="ordered locus">STH2438</name>
</gene>